<organism>
    <name type="scientific">Saccharomyces cerevisiae (strain YJM789)</name>
    <name type="common">Baker's yeast</name>
    <dbReference type="NCBI Taxonomy" id="307796"/>
    <lineage>
        <taxon>Eukaryota</taxon>
        <taxon>Fungi</taxon>
        <taxon>Dikarya</taxon>
        <taxon>Ascomycota</taxon>
        <taxon>Saccharomycotina</taxon>
        <taxon>Saccharomycetes</taxon>
        <taxon>Saccharomycetales</taxon>
        <taxon>Saccharomycetaceae</taxon>
        <taxon>Saccharomyces</taxon>
    </lineage>
</organism>
<proteinExistence type="inferred from homology"/>
<evidence type="ECO:0000250" key="1"/>
<evidence type="ECO:0000255" key="2"/>
<evidence type="ECO:0000256" key="3">
    <source>
        <dbReference type="SAM" id="MobiDB-lite"/>
    </source>
</evidence>
<evidence type="ECO:0000305" key="4"/>
<reference key="1">
    <citation type="journal article" date="2007" name="Proc. Natl. Acad. Sci. U.S.A.">
        <title>Genome sequencing and comparative analysis of Saccharomyces cerevisiae strain YJM789.</title>
        <authorList>
            <person name="Wei W."/>
            <person name="McCusker J.H."/>
            <person name="Hyman R.W."/>
            <person name="Jones T."/>
            <person name="Ning Y."/>
            <person name="Cao Z."/>
            <person name="Gu Z."/>
            <person name="Bruno D."/>
            <person name="Miranda M."/>
            <person name="Nguyen M."/>
            <person name="Wilhelmy J."/>
            <person name="Komp C."/>
            <person name="Tamse R."/>
            <person name="Wang X."/>
            <person name="Jia P."/>
            <person name="Luedi P."/>
            <person name="Oefner P.J."/>
            <person name="David L."/>
            <person name="Dietrich F.S."/>
            <person name="Li Y."/>
            <person name="Davis R.W."/>
            <person name="Steinmetz L.M."/>
        </authorList>
    </citation>
    <scope>NUCLEOTIDE SEQUENCE [LARGE SCALE GENOMIC DNA]</scope>
    <source>
        <strain>YJM789</strain>
    </source>
</reference>
<sequence>MQDNSSHSRESASAGDDPLGIDKLTVDYDYLLYKIRDYVQSIQLDTTELCKKQNEVMVNGIIENTIDKNIAKFKELLEKCDTLENHYEMLNQLAIITDTFKERIAEAVNNYNSLKKGASKSK</sequence>
<gene>
    <name type="primary">CLN1</name>
    <name type="ORF">SCY_1244</name>
</gene>
<protein>
    <recommendedName>
        <fullName>Biogenesis of lysosome-related organelles complex 1 subunit CNL1</fullName>
        <shortName>BLOC-1 subunit CNL1</shortName>
    </recommendedName>
    <alternativeName>
        <fullName>CNO-like protein 1</fullName>
    </alternativeName>
</protein>
<dbReference type="EMBL" id="AAFW02000145">
    <property type="protein sequence ID" value="EDN60686.1"/>
    <property type="molecule type" value="Genomic_DNA"/>
</dbReference>
<dbReference type="SMR" id="A6ZYV6"/>
<dbReference type="HOGENOM" id="CLU_141728_1_0_1"/>
<dbReference type="Proteomes" id="UP000007060">
    <property type="component" value="Unassembled WGS sequence"/>
</dbReference>
<dbReference type="GO" id="GO:0031083">
    <property type="term" value="C:BLOC-1 complex"/>
    <property type="evidence" value="ECO:0007669"/>
    <property type="project" value="InterPro"/>
</dbReference>
<dbReference type="GO" id="GO:0005737">
    <property type="term" value="C:cytoplasm"/>
    <property type="evidence" value="ECO:0007669"/>
    <property type="project" value="UniProtKB-SubCell"/>
</dbReference>
<dbReference type="GO" id="GO:0007032">
    <property type="term" value="P:endosome organization"/>
    <property type="evidence" value="ECO:0007669"/>
    <property type="project" value="TreeGrafter"/>
</dbReference>
<dbReference type="CDD" id="cd24144">
    <property type="entry name" value="BLOC1_CNL1"/>
    <property type="match status" value="1"/>
</dbReference>
<dbReference type="InterPro" id="IPR034455">
    <property type="entry name" value="CNL1"/>
</dbReference>
<dbReference type="PANTHER" id="PTHR39145">
    <property type="entry name" value="BIOGENESIS OF LYSOSOME-RELATED ORGANELLES COMPLEX 1 SUBUNIT CNL1"/>
    <property type="match status" value="1"/>
</dbReference>
<dbReference type="PANTHER" id="PTHR39145:SF1">
    <property type="entry name" value="BIOGENESIS OF LYSOSOME-RELATED ORGANELLES COMPLEX 1 SUBUNIT CNL1"/>
    <property type="match status" value="1"/>
</dbReference>
<comment type="function">
    <text evidence="1">Component of the biogenesis of lysosome-related organelles complex-1 (BLOC-1), a complex that is involved in endosomal cargo sorting.</text>
</comment>
<comment type="subunit">
    <text evidence="1">Component of the biogenesis of lysosome-related organelles complex-1 (BLOC-1) composed of at least BLI1, BLS1, CNL1, KXD1, SNN1 and VAB2.</text>
</comment>
<comment type="subcellular location">
    <subcellularLocation>
        <location evidence="1">Cytoplasm</location>
    </subcellularLocation>
    <text evidence="1">Punctate pattern.</text>
</comment>
<comment type="similarity">
    <text evidence="4">Belongs to the BLOC1S4 family.</text>
</comment>
<name>BL1S4_YEAS7</name>
<feature type="chain" id="PRO_0000410648" description="Biogenesis of lysosome-related organelles complex 1 subunit CNL1">
    <location>
        <begin position="1"/>
        <end position="122"/>
    </location>
</feature>
<feature type="region of interest" description="Disordered" evidence="3">
    <location>
        <begin position="1"/>
        <end position="21"/>
    </location>
</feature>
<feature type="coiled-coil region" evidence="2">
    <location>
        <begin position="63"/>
        <end position="95"/>
    </location>
</feature>
<feature type="compositionally biased region" description="Basic and acidic residues" evidence="3">
    <location>
        <begin position="1"/>
        <end position="10"/>
    </location>
</feature>
<keyword id="KW-0175">Coiled coil</keyword>
<keyword id="KW-0963">Cytoplasm</keyword>
<keyword id="KW-0813">Transport</keyword>
<accession>A6ZYV6</accession>